<organism>
    <name type="scientific">Oryctolagus cuniculus</name>
    <name type="common">Rabbit</name>
    <dbReference type="NCBI Taxonomy" id="9986"/>
    <lineage>
        <taxon>Eukaryota</taxon>
        <taxon>Metazoa</taxon>
        <taxon>Chordata</taxon>
        <taxon>Craniata</taxon>
        <taxon>Vertebrata</taxon>
        <taxon>Euteleostomi</taxon>
        <taxon>Mammalia</taxon>
        <taxon>Eutheria</taxon>
        <taxon>Euarchontoglires</taxon>
        <taxon>Glires</taxon>
        <taxon>Lagomorpha</taxon>
        <taxon>Leporidae</taxon>
        <taxon>Oryctolagus</taxon>
    </lineage>
</organism>
<accession>Q9TV66</accession>
<accession>Q9TU35</accession>
<comment type="function">
    <text evidence="2 3 5 6">Hyperpolarization-activated ion channel that are permeable to Na(+) and K(+) ions with very slow activation and inactivation. Exhibits higher selectivity for K(+) over Na(+) ions (PubMed:10212270, PubMed:34166608). Contributes to the native pacemaker currents in heart (If) that regulate the rhythm of heart beat. Contributes to the native pacemaker currents in neurons (Ih) (By similarity). May mediate responses to sour stimuli (By similarity).</text>
</comment>
<comment type="catalytic activity">
    <reaction evidence="5 6">
        <text>K(+)(in) = K(+)(out)</text>
        <dbReference type="Rhea" id="RHEA:29463"/>
        <dbReference type="ChEBI" id="CHEBI:29103"/>
    </reaction>
</comment>
<comment type="catalytic activity">
    <reaction evidence="5 6">
        <text>Na(+)(in) = Na(+)(out)</text>
        <dbReference type="Rhea" id="RHEA:34963"/>
        <dbReference type="ChEBI" id="CHEBI:29101"/>
    </reaction>
</comment>
<comment type="activity regulation">
    <text evidence="1 3 5 6">Activated by cAMP and to a lesser extent by cGMP and cCMP (PubMed:10212270, PubMed:34166608). cAMP binding causes a conformation change that leads to the assembly of an active tetramer and channel opening by shifting the voltage-dependency towards more positive voltages (PubMed:34166608). Binding of cAMP removes a tonic inhibition conferred by cyclic nucleotide-binding domain (CNBD) on channel opening. Cyclic dinucleotides can modulate HCN4 channel; cyclic dinucleotides acting as potent antagonists of cAMP (By similarity). Inhibited by extracellular Cs(+) ions (PubMed:10212270). Auxiliary subunits can also regulate HCN4 channel. IRAG1 causes a gain-of-function by shifting HCN4 activation to more depolarized membrane potentials in the absence of cAMP. In contrast, IRAG2 causes a loss-of-function by inhibiting cAMP-dependent potentiation of HCN4 activation (By similarity).</text>
</comment>
<comment type="subunit">
    <text evidence="1 3 6 7">Homotetramer (PubMed:34166608). The channel is composed of a homo- or heterotetrameric complex of pore-forming subunits (By similarity). Interacts with PEX5L with a 4:4 HCN4:PEX5L stoichiometry; reduces the effects of cAMP on the voltage-dependence and rate of activation (PubMed:36225302). Interacts with IRAG1; regulates HCN4 channel activity (By similarity). Interacts with IRAG2; regulates HCN4 channel activity (By similarity).</text>
</comment>
<comment type="subcellular location">
    <subcellularLocation>
        <location evidence="5">Cell membrane</location>
        <topology evidence="6">Multi-pass membrane protein</topology>
    </subcellularLocation>
</comment>
<comment type="tissue specificity">
    <text evidence="5">Highly expressed in the heart sinoatrial node (SAN). Not detected in atrium, ventricle, forebrain or cerebellum. Detected at very low levels in total brain.</text>
</comment>
<comment type="domain">
    <text evidence="6">Contains six transmembrane segments (S1-S6) and an intervening P-loop. The segment S4 is the voltage-sensor and is characterized by a series of positively charged amino acids at every third position, while the S5-S6 segments together with the P-loop form a centrally located pore of the channel. Contains a cyclic nucleotide-binding domain (CNBD) in their C-terminal region. The CNBD is connected to the pore forming transmembrane segment via the C-linker.</text>
</comment>
<comment type="domain">
    <text evidence="3">Contains a unique pocket located in the cytosolic C-terminal domain, identified as a likely binding site for di-cyclic nucleotides.</text>
</comment>
<comment type="PTM">
    <text evidence="3">S-palmitoylated.</text>
</comment>
<comment type="similarity">
    <text evidence="9">Belongs to the potassium channel HCN family.</text>
</comment>
<evidence type="ECO:0000250" key="1">
    <source>
        <dbReference type="UniProtKB" id="O70507"/>
    </source>
</evidence>
<evidence type="ECO:0000250" key="2">
    <source>
        <dbReference type="UniProtKB" id="Q9JKA7"/>
    </source>
</evidence>
<evidence type="ECO:0000250" key="3">
    <source>
        <dbReference type="UniProtKB" id="Q9Y3Q4"/>
    </source>
</evidence>
<evidence type="ECO:0000256" key="4">
    <source>
        <dbReference type="SAM" id="MobiDB-lite"/>
    </source>
</evidence>
<evidence type="ECO:0000269" key="5">
    <source>
    </source>
</evidence>
<evidence type="ECO:0000269" key="6">
    <source>
    </source>
</evidence>
<evidence type="ECO:0000269" key="7">
    <source>
    </source>
</evidence>
<evidence type="ECO:0000269" key="8">
    <source>
    </source>
</evidence>
<evidence type="ECO:0000305" key="9"/>
<evidence type="ECO:0007744" key="10">
    <source>
        <dbReference type="PDB" id="7NMN"/>
    </source>
</evidence>
<evidence type="ECO:0007744" key="11">
    <source>
        <dbReference type="PDB" id="7NP3"/>
    </source>
</evidence>
<evidence type="ECO:0007744" key="12">
    <source>
        <dbReference type="PDB" id="7NP4"/>
    </source>
</evidence>
<evidence type="ECO:0007829" key="13">
    <source>
        <dbReference type="PDB" id="7NP3"/>
    </source>
</evidence>
<evidence type="ECO:0007829" key="14">
    <source>
        <dbReference type="PDB" id="7NP4"/>
    </source>
</evidence>
<dbReference type="EMBL" id="AB022927">
    <property type="protein sequence ID" value="BAA77511.2"/>
    <property type="molecule type" value="mRNA"/>
</dbReference>
<dbReference type="EMBL" id="AF155170">
    <property type="protein sequence ID" value="AAF01497.1"/>
    <property type="molecule type" value="mRNA"/>
</dbReference>
<dbReference type="RefSeq" id="NP_001076176.1">
    <property type="nucleotide sequence ID" value="NM_001082707.1"/>
</dbReference>
<dbReference type="PDB" id="7NMN">
    <property type="method" value="EM"/>
    <property type="resolution" value="3.60 A"/>
    <property type="chains" value="A/B/C/D=1-1172"/>
</dbReference>
<dbReference type="PDB" id="7NP3">
    <property type="method" value="EM"/>
    <property type="resolution" value="3.30 A"/>
    <property type="chains" value="A/B/C/D=1-1175"/>
</dbReference>
<dbReference type="PDB" id="7NP4">
    <property type="method" value="EM"/>
    <property type="resolution" value="3.30 A"/>
    <property type="chains" value="A/B/C/D=1-1175"/>
</dbReference>
<dbReference type="PDB" id="8OFI">
    <property type="method" value="EM"/>
    <property type="resolution" value="3.60 A"/>
    <property type="chains" value="A/B/C/D=1-1175"/>
</dbReference>
<dbReference type="PDBsum" id="7NMN"/>
<dbReference type="PDBsum" id="7NP3"/>
<dbReference type="PDBsum" id="7NP4"/>
<dbReference type="PDBsum" id="8OFI"/>
<dbReference type="EMDB" id="EMD-12466"/>
<dbReference type="EMDB" id="EMD-12512"/>
<dbReference type="EMDB" id="EMD-12513"/>
<dbReference type="EMDB" id="EMD-16860"/>
<dbReference type="SMR" id="Q9TV66"/>
<dbReference type="FunCoup" id="Q9TV66">
    <property type="interactions" value="13"/>
</dbReference>
<dbReference type="STRING" id="9986.ENSOCUP00000015489"/>
<dbReference type="GlyCosmos" id="Q9TV66">
    <property type="glycosylation" value="1 site, No reported glycans"/>
</dbReference>
<dbReference type="PaxDb" id="9986-ENSOCUP00000006294"/>
<dbReference type="GeneID" id="100009452"/>
<dbReference type="KEGG" id="ocu:100009452"/>
<dbReference type="CTD" id="10021"/>
<dbReference type="eggNOG" id="KOG0498">
    <property type="taxonomic scope" value="Eukaryota"/>
</dbReference>
<dbReference type="InParanoid" id="Q9TV66"/>
<dbReference type="OrthoDB" id="421226at2759"/>
<dbReference type="PRO" id="PR:Q9TV66"/>
<dbReference type="Proteomes" id="UP000001811">
    <property type="component" value="Unplaced"/>
</dbReference>
<dbReference type="GO" id="GO:0030424">
    <property type="term" value="C:axon"/>
    <property type="evidence" value="ECO:0007669"/>
    <property type="project" value="TreeGrafter"/>
</dbReference>
<dbReference type="GO" id="GO:0030425">
    <property type="term" value="C:dendrite"/>
    <property type="evidence" value="ECO:0007669"/>
    <property type="project" value="TreeGrafter"/>
</dbReference>
<dbReference type="GO" id="GO:0098855">
    <property type="term" value="C:HCN channel complex"/>
    <property type="evidence" value="ECO:0007669"/>
    <property type="project" value="TreeGrafter"/>
</dbReference>
<dbReference type="GO" id="GO:0005886">
    <property type="term" value="C:plasma membrane"/>
    <property type="evidence" value="ECO:0000250"/>
    <property type="project" value="UniProtKB"/>
</dbReference>
<dbReference type="GO" id="GO:0016208">
    <property type="term" value="F:AMP binding"/>
    <property type="evidence" value="ECO:0000314"/>
    <property type="project" value="UniProtKB"/>
</dbReference>
<dbReference type="GO" id="GO:0030552">
    <property type="term" value="F:cAMP binding"/>
    <property type="evidence" value="ECO:0007669"/>
    <property type="project" value="UniProtKB-KW"/>
</dbReference>
<dbReference type="GO" id="GO:0042802">
    <property type="term" value="F:identical protein binding"/>
    <property type="evidence" value="ECO:0000314"/>
    <property type="project" value="UniProtKB"/>
</dbReference>
<dbReference type="GO" id="GO:0005222">
    <property type="term" value="F:intracellularly cAMP-activated cation channel activity"/>
    <property type="evidence" value="ECO:0000314"/>
    <property type="project" value="UniProtKB"/>
</dbReference>
<dbReference type="GO" id="GO:0005267">
    <property type="term" value="F:potassium channel activity"/>
    <property type="evidence" value="ECO:0000314"/>
    <property type="project" value="UniProtKB"/>
</dbReference>
<dbReference type="GO" id="GO:0005272">
    <property type="term" value="F:sodium channel activity"/>
    <property type="evidence" value="ECO:0007669"/>
    <property type="project" value="UniProtKB-KW"/>
</dbReference>
<dbReference type="GO" id="GO:0005249">
    <property type="term" value="F:voltage-gated potassium channel activity"/>
    <property type="evidence" value="ECO:0000314"/>
    <property type="project" value="UniProtKB"/>
</dbReference>
<dbReference type="GO" id="GO:0071320">
    <property type="term" value="P:cellular response to cAMP"/>
    <property type="evidence" value="ECO:0000250"/>
    <property type="project" value="UniProtKB"/>
</dbReference>
<dbReference type="GO" id="GO:0071805">
    <property type="term" value="P:potassium ion transmembrane transport"/>
    <property type="evidence" value="ECO:0000314"/>
    <property type="project" value="UniProtKB"/>
</dbReference>
<dbReference type="GO" id="GO:0002027">
    <property type="term" value="P:regulation of heart rate"/>
    <property type="evidence" value="ECO:0000250"/>
    <property type="project" value="UniProtKB"/>
</dbReference>
<dbReference type="GO" id="GO:0003254">
    <property type="term" value="P:regulation of membrane depolarization"/>
    <property type="evidence" value="ECO:0007669"/>
    <property type="project" value="TreeGrafter"/>
</dbReference>
<dbReference type="GO" id="GO:0035725">
    <property type="term" value="P:sodium ion transmembrane transport"/>
    <property type="evidence" value="ECO:0000314"/>
    <property type="project" value="UniProtKB"/>
</dbReference>
<dbReference type="CDD" id="cd00038">
    <property type="entry name" value="CAP_ED"/>
    <property type="match status" value="1"/>
</dbReference>
<dbReference type="FunFam" id="1.10.287.70:FF:000031">
    <property type="entry name" value="Potassium/sodium hyperpolarization-activated cyclic nucleotide-gated channel 1, putative"/>
    <property type="match status" value="1"/>
</dbReference>
<dbReference type="FunFam" id="1.10.287.630:FF:000002">
    <property type="entry name" value="Potassium/sodium hyperpolarization-activated cyclic nucleotide-gated channel 4"/>
    <property type="match status" value="1"/>
</dbReference>
<dbReference type="FunFam" id="2.60.120.10:FF:000007">
    <property type="entry name" value="Putative potassium/sodium hyperpolarization-activated cyclic nucleotide-gated channel 2"/>
    <property type="match status" value="1"/>
</dbReference>
<dbReference type="Gene3D" id="1.10.287.70">
    <property type="match status" value="1"/>
</dbReference>
<dbReference type="Gene3D" id="1.10.287.630">
    <property type="entry name" value="Helix hairpin bin"/>
    <property type="match status" value="1"/>
</dbReference>
<dbReference type="Gene3D" id="2.60.120.10">
    <property type="entry name" value="Jelly Rolls"/>
    <property type="match status" value="1"/>
</dbReference>
<dbReference type="InterPro" id="IPR018488">
    <property type="entry name" value="cNMP-bd_CS"/>
</dbReference>
<dbReference type="InterPro" id="IPR000595">
    <property type="entry name" value="cNMP-bd_dom"/>
</dbReference>
<dbReference type="InterPro" id="IPR018490">
    <property type="entry name" value="cNMP-bd_dom_sf"/>
</dbReference>
<dbReference type="InterPro" id="IPR005821">
    <property type="entry name" value="Ion_trans_dom"/>
</dbReference>
<dbReference type="InterPro" id="IPR013621">
    <property type="entry name" value="Ion_trans_N"/>
</dbReference>
<dbReference type="InterPro" id="IPR051413">
    <property type="entry name" value="K/Na_HCN_channel"/>
</dbReference>
<dbReference type="InterPro" id="IPR003938">
    <property type="entry name" value="K_chnl_volt-dep_EAG/ELK/ERG"/>
</dbReference>
<dbReference type="InterPro" id="IPR014710">
    <property type="entry name" value="RmlC-like_jellyroll"/>
</dbReference>
<dbReference type="PANTHER" id="PTHR45689">
    <property type="entry name" value="I[[H]] CHANNEL, ISOFORM E"/>
    <property type="match status" value="1"/>
</dbReference>
<dbReference type="PANTHER" id="PTHR45689:SF4">
    <property type="entry name" value="POTASSIUM_SODIUM HYPERPOLARIZATION-ACTIVATED CYCLIC NUCLEOTIDE-GATED CHANNEL 4"/>
    <property type="match status" value="1"/>
</dbReference>
<dbReference type="Pfam" id="PF00027">
    <property type="entry name" value="cNMP_binding"/>
    <property type="match status" value="1"/>
</dbReference>
<dbReference type="Pfam" id="PF00520">
    <property type="entry name" value="Ion_trans"/>
    <property type="match status" value="1"/>
</dbReference>
<dbReference type="Pfam" id="PF08412">
    <property type="entry name" value="Ion_trans_N"/>
    <property type="match status" value="1"/>
</dbReference>
<dbReference type="PRINTS" id="PR01463">
    <property type="entry name" value="EAGCHANLFMLY"/>
</dbReference>
<dbReference type="SMART" id="SM00100">
    <property type="entry name" value="cNMP"/>
    <property type="match status" value="1"/>
</dbReference>
<dbReference type="SUPFAM" id="SSF51206">
    <property type="entry name" value="cAMP-binding domain-like"/>
    <property type="match status" value="1"/>
</dbReference>
<dbReference type="SUPFAM" id="SSF81324">
    <property type="entry name" value="Voltage-gated potassium channels"/>
    <property type="match status" value="1"/>
</dbReference>
<dbReference type="PROSITE" id="PS00888">
    <property type="entry name" value="CNMP_BINDING_1"/>
    <property type="match status" value="1"/>
</dbReference>
<dbReference type="PROSITE" id="PS50042">
    <property type="entry name" value="CNMP_BINDING_3"/>
    <property type="match status" value="1"/>
</dbReference>
<gene>
    <name type="primary">HCN4</name>
    <name type="synonym">HAC4</name>
</gene>
<keyword id="KW-0002">3D-structure</keyword>
<keyword id="KW-0114">cAMP</keyword>
<keyword id="KW-0116">cAMP-binding</keyword>
<keyword id="KW-1003">Cell membrane</keyword>
<keyword id="KW-0407">Ion channel</keyword>
<keyword id="KW-0406">Ion transport</keyword>
<keyword id="KW-1071">Ligand-gated ion channel</keyword>
<keyword id="KW-0472">Membrane</keyword>
<keyword id="KW-0547">Nucleotide-binding</keyword>
<keyword id="KW-0597">Phosphoprotein</keyword>
<keyword id="KW-0630">Potassium</keyword>
<keyword id="KW-0631">Potassium channel</keyword>
<keyword id="KW-0633">Potassium transport</keyword>
<keyword id="KW-1185">Reference proteome</keyword>
<keyword id="KW-0915">Sodium</keyword>
<keyword id="KW-0894">Sodium channel</keyword>
<keyword id="KW-0739">Sodium transport</keyword>
<keyword id="KW-0812">Transmembrane</keyword>
<keyword id="KW-1133">Transmembrane helix</keyword>
<keyword id="KW-0813">Transport</keyword>
<keyword id="KW-0851">Voltage-gated channel</keyword>
<reference key="1">
    <citation type="journal article" date="1999" name="J. Biol. Chem.">
        <title>Molecular characterization of the hyperpolarization-activated cation channel in rabbit heart sinoatrial node.</title>
        <authorList>
            <person name="Ishii T.M."/>
            <person name="Takano M."/>
            <person name="Xie L.-H."/>
            <person name="Noma A."/>
            <person name="Ohmori H."/>
        </authorList>
    </citation>
    <scope>NUCLEOTIDE SEQUENCE [MRNA]</scope>
    <scope>FUNCTION</scope>
    <scope>TRANSPORTER ACTIVITY</scope>
    <scope>ACTIVITY REGULATION</scope>
    <scope>SUBCELLULAR LOCATION</scope>
    <scope>TISSUE SPECIFICITY</scope>
    <source>
        <tissue>Heart atrium</tissue>
    </source>
</reference>
<reference key="2">
    <citation type="journal article" date="1999" name="Circ. Res.">
        <title>Distribution and prevalence of hyperpolarization-activated cation channel (HCN) mRNA expression in cardiac tissues.</title>
        <authorList>
            <person name="Shi W."/>
            <person name="Wymore R."/>
            <person name="Yu H."/>
            <person name="Wu J."/>
            <person name="Wymore R.T."/>
            <person name="Pan Z."/>
            <person name="Robinson R.B."/>
            <person name="Dixon J.E."/>
            <person name="McKinnon D."/>
            <person name="Cohen I.S."/>
        </authorList>
    </citation>
    <scope>NUCLEOTIDE SEQUENCE [MRNA] OF 261-381</scope>
    <source>
        <tissue>Heart</tissue>
    </source>
</reference>
<reference evidence="10 11 12" key="3">
    <citation type="journal article" date="2021" name="Mol. Cell">
        <title>Gating movements and ion permeation in HCN4 pacemaker channels.</title>
        <authorList>
            <person name="Saponaro A."/>
            <person name="Bauer D."/>
            <person name="Giese M.H."/>
            <person name="Swuec P."/>
            <person name="Porro A."/>
            <person name="Gasparri F."/>
            <person name="Sharifzadeh A.S."/>
            <person name="Chaves-Sanjuan A."/>
            <person name="Alberio L."/>
            <person name="Parisi G."/>
            <person name="Cerutti G."/>
            <person name="Clarke O.B."/>
            <person name="Hamacher K."/>
            <person name="Colecraft H.M."/>
            <person name="Mancia F."/>
            <person name="Hendrickson W.A."/>
            <person name="Siegelbaum S.A."/>
            <person name="DiFrancesco D."/>
            <person name="Bolognesi M."/>
            <person name="Thiel G."/>
            <person name="Santoro B."/>
            <person name="Moroni A."/>
        </authorList>
    </citation>
    <scope>STRUCTURE BY ELECTRON MICROSCOPY (3.30 ANGSTROMS) IN COMPLEX WITH 3',5'-CYCLIC AMP</scope>
    <scope>FUNCTION</scope>
    <scope>TRANSPORTER ACTIVITY</scope>
    <scope>SUBUNIT</scope>
    <scope>ACTIVITY REGULATION</scope>
    <scope>MUTAGENESIS OF HIS-407; HIS-553 AND GLU-557</scope>
</reference>
<reference key="4">
    <citation type="journal article" date="2022" name="Front. Physiol.">
        <title>Validation of the binding stoichiometry between HCN channels and their neuronal regulator TRIP8b by single molecule measurements.</title>
        <authorList>
            <person name="Saponaro A."/>
            <person name="Vallese F."/>
            <person name="Porro A."/>
            <person name="Clarke O.B."/>
        </authorList>
    </citation>
    <scope>INTERACTION WITH PEX5L</scope>
</reference>
<reference key="5">
    <citation type="journal article" date="2024" name="Nat. Commun.">
        <title>A high affinity switch for cAMP in the HCN pacemaker channels.</title>
        <authorList>
            <person name="Porro A."/>
            <person name="Saponaro A."/>
            <person name="Castelli R."/>
            <person name="Introini B."/>
            <person name="Hafez Alkotob A."/>
            <person name="Ranjbari G."/>
            <person name="Enke U."/>
            <person name="Kusch J."/>
            <person name="Benndorf K."/>
            <person name="Santoro B."/>
            <person name="DiFrancesco D."/>
            <person name="Thiel G."/>
            <person name="Moroni A."/>
        </authorList>
    </citation>
    <scope>FUNCTION</scope>
    <scope>MUTAGENESIS OF ASP-750</scope>
</reference>
<proteinExistence type="evidence at protein level"/>
<sequence length="1175" mass="126142">MDKLPPSMRKRLYSLPQQVGAKAWIMDEEEDAEEEGAGGRQDPRRRSIRLRPLPSPSPSPSAAAAAAGGAESRGAALGGAADGEGPARGAAKSSTNGDCRRFRGSLASLGSRGGGGGGGSTGGGSHGHLHDSAEERRLIAEGDASPGEDRTPPGLAAEPERPGAPAPPAASPPQVPSSCGEQRPADAAVKVEGGAAAGDQILPEAEARLGQAGFMQRQFGAMLQPGVNKFSLRMFGSQKAVEREQERVKSAGFWIIHPYSDFRFYWDLTMLLLMVGNLIIIPVGITFFKDENTTPWIVFNVVSDTFFLIDLVLNFRTGIVVEDNTDIILDPRRIKMKYLKSWFVVDFVSSIPVDYIFLIVETRIDSEVYKTARALRIVRFTKILSLLRLLRLSRLIRYIHQWEEIFHMTYDLASAVVRIVNLIGMMLLLCHWDGCLQFLVPMLQDFPDDCWVSLNNMVNNSWGKQYSYALFKAMSHMLCIGYGRQAPMGMSDVWLTMLSMIVGATCYAMFIGHATALIQSLDSSRRQYQEKYKQVEQYMSFHKLPPDTRQRIHDYYEHRYQGKMFDEESILGELSEPLREEIINFNCRKLVASMPLFANADPNFVTSMLTKLRFEVFQPGDYIIREGTIGKKMYFIQHGVVSVLTKGNKETKLADGSYFGEICLLTRGRRTASVRADTYCRLYSLSVDNFNEVLEEYPMMRRAFETVALDRLDRIGKKNSILLHKVQHDLSSGVSNYQENAIVQRIVQHDREMAHCARRAQATTPVAPAIWTPLIQAPLQAAAATTSVAIALTHHPRLPAAIFRPPPGPTTLGSLGAGQTPRHLRRLQSLAPSAPSPASPASSPSQPDTPSSASLHVQPLPGCSTPAGLGSLLPTAGSPPAPTPPTTAGAAGFSHFHRALGGSLSSSDSPLLTPMQSAARSPQQPPPPPGAPAGLGLLEHFLPPPARSPTSSPGQLGQPPGELSPGLGSGPPGTPETPPRQPERLPFAAGASAGASPVAFSPRGGPSPPGHSPGTPRTFPSAPPRASGSHGSLLLPPASSPPPPPPPPAPQRRATPPLAPGRLSQDLKLISASQPALPQDGAQTLRRASPHSSSGESVAALPPFPRAPGRPPGAGPGQHVTLTLPRKASSGSLPPPLSLFGPRAAPAGGPRLTAAPQREPGAKSEPVRSKLPSNL</sequence>
<feature type="chain" id="PRO_0000054119" description="Potassium/sodium hyperpolarization-activated cyclic nucleotide-gated channel 4">
    <location>
        <begin position="1"/>
        <end position="1175"/>
    </location>
</feature>
<feature type="topological domain" description="Cytoplasmic" evidence="9">
    <location>
        <begin position="1"/>
        <end position="259"/>
    </location>
</feature>
<feature type="transmembrane region" description="Helical; Name=Segment S1" evidence="6 12">
    <location>
        <begin position="260"/>
        <end position="288"/>
    </location>
</feature>
<feature type="topological domain" description="Extracellular" evidence="9">
    <location>
        <begin position="289"/>
        <end position="292"/>
    </location>
</feature>
<feature type="transmembrane region" description="Helical; Name=Segment S2" evidence="6 12">
    <location>
        <begin position="293"/>
        <end position="316"/>
    </location>
</feature>
<feature type="topological domain" description="Cytoplasmic" evidence="9">
    <location>
        <begin position="317"/>
        <end position="329"/>
    </location>
</feature>
<feature type="transmembrane region" description="Helical; Name=Segment S3" evidence="6 12">
    <location>
        <begin position="330"/>
        <end position="352"/>
    </location>
</feature>
<feature type="topological domain" description="Extracellular" evidence="9">
    <location>
        <begin position="353"/>
        <end position="374"/>
    </location>
</feature>
<feature type="transmembrane region" description="Helical; Voltage-sensor; Name=Segment S4" evidence="6 12">
    <location>
        <begin position="375"/>
        <end position="410"/>
    </location>
</feature>
<feature type="topological domain" description="Cytoplasmic" evidence="9">
    <location>
        <begin position="411"/>
        <end position="413"/>
    </location>
</feature>
<feature type="transmembrane region" description="Helical; Name=Segment S5" evidence="6 12">
    <location>
        <begin position="414"/>
        <end position="444"/>
    </location>
</feature>
<feature type="topological domain" description="Extracellular" evidence="9">
    <location>
        <begin position="445"/>
        <end position="449"/>
    </location>
</feature>
<feature type="intramembrane region" description="Pore-forming; Name=Segment H5" evidence="6 12">
    <location>
        <begin position="450"/>
        <end position="478"/>
    </location>
</feature>
<feature type="topological domain" description="Extracellular" evidence="9">
    <location>
        <begin position="479"/>
        <end position="488"/>
    </location>
</feature>
<feature type="transmembrane region" description="Helical; Name=Segment S6" evidence="6 12">
    <location>
        <begin position="489"/>
        <end position="521"/>
    </location>
</feature>
<feature type="topological domain" description="Cytoplasmic" evidence="9">
    <location>
        <begin position="522"/>
        <end position="1175"/>
    </location>
</feature>
<feature type="region of interest" description="Disordered" evidence="4">
    <location>
        <begin position="17"/>
        <end position="186"/>
    </location>
</feature>
<feature type="region of interest" description="Disordered" evidence="4">
    <location>
        <begin position="801"/>
        <end position="820"/>
    </location>
</feature>
<feature type="region of interest" description="Disordered" evidence="4">
    <location>
        <begin position="830"/>
        <end position="1175"/>
    </location>
</feature>
<feature type="compositionally biased region" description="Acidic residues" evidence="4">
    <location>
        <begin position="26"/>
        <end position="36"/>
    </location>
</feature>
<feature type="compositionally biased region" description="Low complexity" evidence="4">
    <location>
        <begin position="60"/>
        <end position="75"/>
    </location>
</feature>
<feature type="compositionally biased region" description="Gly residues" evidence="4">
    <location>
        <begin position="111"/>
        <end position="126"/>
    </location>
</feature>
<feature type="compositionally biased region" description="Basic and acidic residues" evidence="4">
    <location>
        <begin position="128"/>
        <end position="140"/>
    </location>
</feature>
<feature type="compositionally biased region" description="Pro residues" evidence="4">
    <location>
        <begin position="162"/>
        <end position="175"/>
    </location>
</feature>
<feature type="compositionally biased region" description="Low complexity" evidence="4">
    <location>
        <begin position="839"/>
        <end position="854"/>
    </location>
</feature>
<feature type="compositionally biased region" description="Low complexity" evidence="4">
    <location>
        <begin position="900"/>
        <end position="912"/>
    </location>
</feature>
<feature type="compositionally biased region" description="Low complexity" evidence="4">
    <location>
        <begin position="948"/>
        <end position="966"/>
    </location>
</feature>
<feature type="compositionally biased region" description="Low complexity" evidence="4">
    <location>
        <begin position="984"/>
        <end position="1004"/>
    </location>
</feature>
<feature type="compositionally biased region" description="Pro residues" evidence="4">
    <location>
        <begin position="1038"/>
        <end position="1050"/>
    </location>
</feature>
<feature type="compositionally biased region" description="Pro residues" evidence="4">
    <location>
        <begin position="1102"/>
        <end position="1114"/>
    </location>
</feature>
<feature type="binding site" evidence="3">
    <location>
        <position position="560"/>
    </location>
    <ligand>
        <name>3',5'-cyclic GMP</name>
        <dbReference type="ChEBI" id="CHEBI:57746"/>
    </ligand>
</feature>
<feature type="binding site" evidence="3">
    <location>
        <position position="563"/>
    </location>
    <ligand>
        <name>3',5'-cyclic GMP</name>
        <dbReference type="ChEBI" id="CHEBI:57746"/>
    </ligand>
</feature>
<feature type="binding site" evidence="3">
    <location>
        <position position="565"/>
    </location>
    <ligand>
        <name>3',5'-cyclic GMP</name>
        <dbReference type="ChEBI" id="CHEBI:57746"/>
    </ligand>
</feature>
<feature type="binding site" evidence="3">
    <location>
        <position position="567"/>
    </location>
    <ligand>
        <name>3',5'-cyclic GMP</name>
        <dbReference type="ChEBI" id="CHEBI:57746"/>
    </ligand>
</feature>
<feature type="binding site" evidence="6 12">
    <location>
        <position position="660"/>
    </location>
    <ligand>
        <name>3',5'-cyclic AMP</name>
        <dbReference type="ChEBI" id="CHEBI:58165"/>
    </ligand>
</feature>
<feature type="binding site" evidence="6 12">
    <location>
        <position position="661"/>
    </location>
    <ligand>
        <name>3',5'-cyclic AMP</name>
        <dbReference type="ChEBI" id="CHEBI:58165"/>
    </ligand>
</feature>
<feature type="binding site" evidence="6 12">
    <location>
        <position position="663"/>
    </location>
    <ligand>
        <name>3',5'-cyclic AMP</name>
        <dbReference type="ChEBI" id="CHEBI:58165"/>
    </ligand>
</feature>
<feature type="binding site" evidence="6 12">
    <location>
        <position position="670"/>
    </location>
    <ligand>
        <name>3',5'-cyclic AMP</name>
        <dbReference type="ChEBI" id="CHEBI:58165"/>
    </ligand>
</feature>
<feature type="binding site" evidence="6 12">
    <location>
        <position position="671"/>
    </location>
    <ligand>
        <name>3',5'-cyclic AMP</name>
        <dbReference type="ChEBI" id="CHEBI:58165"/>
    </ligand>
</feature>
<feature type="binding site" evidence="6 12">
    <location>
        <position position="674"/>
    </location>
    <ligand>
        <name>3',5'-cyclic AMP</name>
        <dbReference type="ChEBI" id="CHEBI:58165"/>
    </ligand>
</feature>
<feature type="binding site" evidence="3">
    <location>
        <position position="711"/>
    </location>
    <ligand>
        <name>3',5'-cyclic AMP</name>
        <dbReference type="ChEBI" id="CHEBI:58165"/>
    </ligand>
</feature>
<feature type="modified residue" description="Phosphoserine" evidence="2">
    <location>
        <position position="145"/>
    </location>
</feature>
<feature type="modified residue" description="Phosphoserine" evidence="1">
    <location>
        <position position="1089"/>
    </location>
</feature>
<feature type="modified residue" description="Phosphoserine" evidence="1">
    <location>
        <position position="1093"/>
    </location>
</feature>
<feature type="mutagenesis site" description="Reduces response to cAMP." evidence="6">
    <original>H</original>
    <variation>A</variation>
    <location>
        <position position="407"/>
    </location>
</feature>
<feature type="mutagenesis site" description="Reduces response to cAMP." evidence="6">
    <original>H</original>
    <variation>A</variation>
    <location>
        <position position="553"/>
    </location>
</feature>
<feature type="mutagenesis site" description="Reduces response to cAMP." evidence="6">
    <original>E</original>
    <variation>A</variation>
    <location>
        <position position="557"/>
    </location>
</feature>
<feature type="mutagenesis site" description="Decreases binding affinity to cAMP." evidence="8">
    <original>D</original>
    <variation>A</variation>
    <location>
        <position position="750"/>
    </location>
</feature>
<feature type="helix" evidence="13">
    <location>
        <begin position="218"/>
        <end position="221"/>
    </location>
</feature>
<feature type="helix" evidence="13">
    <location>
        <begin position="229"/>
        <end position="235"/>
    </location>
</feature>
<feature type="helix" evidence="13">
    <location>
        <begin position="238"/>
        <end position="249"/>
    </location>
</feature>
<feature type="helix" evidence="13">
    <location>
        <begin position="261"/>
        <end position="286"/>
    </location>
</feature>
<feature type="strand" evidence="13">
    <location>
        <begin position="287"/>
        <end position="290"/>
    </location>
</feature>
<feature type="helix" evidence="13">
    <location>
        <begin position="297"/>
        <end position="315"/>
    </location>
</feature>
<feature type="helix" evidence="13">
    <location>
        <begin position="331"/>
        <end position="341"/>
    </location>
</feature>
<feature type="helix" evidence="13">
    <location>
        <begin position="343"/>
        <end position="348"/>
    </location>
</feature>
<feature type="helix" evidence="13">
    <location>
        <begin position="353"/>
        <end position="364"/>
    </location>
</feature>
<feature type="helix" evidence="13">
    <location>
        <begin position="366"/>
        <end position="368"/>
    </location>
</feature>
<feature type="strand" evidence="14">
    <location>
        <begin position="369"/>
        <end position="371"/>
    </location>
</feature>
<feature type="helix" evidence="13">
    <location>
        <begin position="373"/>
        <end position="384"/>
    </location>
</feature>
<feature type="helix" evidence="13">
    <location>
        <begin position="385"/>
        <end position="390"/>
    </location>
</feature>
<feature type="helix" evidence="13">
    <location>
        <begin position="392"/>
        <end position="404"/>
    </location>
</feature>
<feature type="helix" evidence="13">
    <location>
        <begin position="407"/>
        <end position="410"/>
    </location>
</feature>
<feature type="helix" evidence="13">
    <location>
        <begin position="412"/>
        <end position="414"/>
    </location>
</feature>
<feature type="helix" evidence="13">
    <location>
        <begin position="415"/>
        <end position="443"/>
    </location>
</feature>
<feature type="helix" evidence="13">
    <location>
        <begin position="451"/>
        <end position="454"/>
    </location>
</feature>
<feature type="strand" evidence="13">
    <location>
        <begin position="458"/>
        <end position="460"/>
    </location>
</feature>
<feature type="helix" evidence="13">
    <location>
        <begin position="462"/>
        <end position="478"/>
    </location>
</feature>
<feature type="strand" evidence="13">
    <location>
        <begin position="483"/>
        <end position="485"/>
    </location>
</feature>
<feature type="helix" evidence="13">
    <location>
        <begin position="490"/>
        <end position="519"/>
    </location>
</feature>
<feature type="helix" evidence="13">
    <location>
        <begin position="523"/>
        <end position="541"/>
    </location>
</feature>
<feature type="helix" evidence="13">
    <location>
        <begin position="548"/>
        <end position="560"/>
    </location>
</feature>
<feature type="helix" evidence="13">
    <location>
        <begin position="569"/>
        <end position="572"/>
    </location>
</feature>
<feature type="helix" evidence="13">
    <location>
        <begin position="576"/>
        <end position="593"/>
    </location>
</feature>
<feature type="helix" evidence="13">
    <location>
        <begin position="595"/>
        <end position="598"/>
    </location>
</feature>
<feature type="helix" evidence="13">
    <location>
        <begin position="602"/>
        <end position="608"/>
    </location>
</feature>
<feature type="helix" evidence="13">
    <location>
        <begin position="609"/>
        <end position="611"/>
    </location>
</feature>
<feature type="strand" evidence="14">
    <location>
        <begin position="613"/>
        <end position="617"/>
    </location>
</feature>
<feature type="strand" evidence="14">
    <location>
        <begin position="622"/>
        <end position="624"/>
    </location>
</feature>
<feature type="strand" evidence="13">
    <location>
        <begin position="632"/>
        <end position="635"/>
    </location>
</feature>
<feature type="strand" evidence="13">
    <location>
        <begin position="638"/>
        <end position="644"/>
    </location>
</feature>
<feature type="strand" evidence="13">
    <location>
        <begin position="646"/>
        <end position="648"/>
    </location>
</feature>
<feature type="strand" evidence="13">
    <location>
        <begin position="653"/>
        <end position="656"/>
    </location>
</feature>
<feature type="helix" evidence="13">
    <location>
        <begin position="661"/>
        <end position="663"/>
    </location>
</feature>
<feature type="strand" evidence="13">
    <location>
        <begin position="673"/>
        <end position="678"/>
    </location>
</feature>
<feature type="strand" evidence="13">
    <location>
        <begin position="683"/>
        <end position="685"/>
    </location>
</feature>
<feature type="helix" evidence="13">
    <location>
        <begin position="688"/>
        <end position="696"/>
    </location>
</feature>
<feature type="helix" evidence="13">
    <location>
        <begin position="698"/>
        <end position="703"/>
    </location>
</feature>
<protein>
    <recommendedName>
        <fullName>Potassium/sodium hyperpolarization-activated cyclic nucleotide-gated channel 4</fullName>
    </recommendedName>
    <alternativeName>
        <fullName>Hyperpolarization-activated cation channel 4</fullName>
        <shortName>HAC-4</shortName>
    </alternativeName>
</protein>
<name>HCN4_RABIT</name>